<name>RL6_COLP3</name>
<evidence type="ECO:0000255" key="1">
    <source>
        <dbReference type="HAMAP-Rule" id="MF_01365"/>
    </source>
</evidence>
<evidence type="ECO:0000305" key="2"/>
<sequence length="177" mass="19049">MSRVAKAPVVVPAGVTITLSGQDITVKGPIGELSRTIHSDVVVSQEENNIITNIVADVKGAWAQAGTTRALINNMVEGVSKGFEKKLVLQGVGYRAKAAGKSLDLSLGFSHPIKHAIPEGITCETPSQTEVTLKGCDKHLVGQTAANIRAYRKPEPYKGKGVRYVDEYVRRKEAKKK</sequence>
<keyword id="KW-0687">Ribonucleoprotein</keyword>
<keyword id="KW-0689">Ribosomal protein</keyword>
<keyword id="KW-0694">RNA-binding</keyword>
<keyword id="KW-0699">rRNA-binding</keyword>
<dbReference type="EMBL" id="CP000083">
    <property type="protein sequence ID" value="AAZ28521.1"/>
    <property type="molecule type" value="Genomic_DNA"/>
</dbReference>
<dbReference type="RefSeq" id="WP_011041466.1">
    <property type="nucleotide sequence ID" value="NC_003910.7"/>
</dbReference>
<dbReference type="SMR" id="Q488Z8"/>
<dbReference type="STRING" id="167879.CPS_0616"/>
<dbReference type="KEGG" id="cps:CPS_0616"/>
<dbReference type="eggNOG" id="COG0097">
    <property type="taxonomic scope" value="Bacteria"/>
</dbReference>
<dbReference type="HOGENOM" id="CLU_065464_1_2_6"/>
<dbReference type="Proteomes" id="UP000000547">
    <property type="component" value="Chromosome"/>
</dbReference>
<dbReference type="GO" id="GO:0022625">
    <property type="term" value="C:cytosolic large ribosomal subunit"/>
    <property type="evidence" value="ECO:0007669"/>
    <property type="project" value="TreeGrafter"/>
</dbReference>
<dbReference type="GO" id="GO:0019843">
    <property type="term" value="F:rRNA binding"/>
    <property type="evidence" value="ECO:0007669"/>
    <property type="project" value="UniProtKB-UniRule"/>
</dbReference>
<dbReference type="GO" id="GO:0003735">
    <property type="term" value="F:structural constituent of ribosome"/>
    <property type="evidence" value="ECO:0007669"/>
    <property type="project" value="InterPro"/>
</dbReference>
<dbReference type="GO" id="GO:0002181">
    <property type="term" value="P:cytoplasmic translation"/>
    <property type="evidence" value="ECO:0007669"/>
    <property type="project" value="TreeGrafter"/>
</dbReference>
<dbReference type="FunFam" id="3.90.930.12:FF:000001">
    <property type="entry name" value="50S ribosomal protein L6"/>
    <property type="match status" value="1"/>
</dbReference>
<dbReference type="FunFam" id="3.90.930.12:FF:000002">
    <property type="entry name" value="50S ribosomal protein L6"/>
    <property type="match status" value="1"/>
</dbReference>
<dbReference type="Gene3D" id="3.90.930.12">
    <property type="entry name" value="Ribosomal protein L6, alpha-beta domain"/>
    <property type="match status" value="2"/>
</dbReference>
<dbReference type="HAMAP" id="MF_01365_B">
    <property type="entry name" value="Ribosomal_uL6_B"/>
    <property type="match status" value="1"/>
</dbReference>
<dbReference type="InterPro" id="IPR000702">
    <property type="entry name" value="Ribosomal_uL6-like"/>
</dbReference>
<dbReference type="InterPro" id="IPR036789">
    <property type="entry name" value="Ribosomal_uL6-like_a/b-dom_sf"/>
</dbReference>
<dbReference type="InterPro" id="IPR020040">
    <property type="entry name" value="Ribosomal_uL6_a/b-dom"/>
</dbReference>
<dbReference type="InterPro" id="IPR019906">
    <property type="entry name" value="Ribosomal_uL6_bac-type"/>
</dbReference>
<dbReference type="InterPro" id="IPR002358">
    <property type="entry name" value="Ribosomal_uL6_CS"/>
</dbReference>
<dbReference type="NCBIfam" id="TIGR03654">
    <property type="entry name" value="L6_bact"/>
    <property type="match status" value="1"/>
</dbReference>
<dbReference type="PANTHER" id="PTHR11655">
    <property type="entry name" value="60S/50S RIBOSOMAL PROTEIN L6/L9"/>
    <property type="match status" value="1"/>
</dbReference>
<dbReference type="PANTHER" id="PTHR11655:SF14">
    <property type="entry name" value="LARGE RIBOSOMAL SUBUNIT PROTEIN UL6M"/>
    <property type="match status" value="1"/>
</dbReference>
<dbReference type="Pfam" id="PF00347">
    <property type="entry name" value="Ribosomal_L6"/>
    <property type="match status" value="2"/>
</dbReference>
<dbReference type="PIRSF" id="PIRSF002162">
    <property type="entry name" value="Ribosomal_L6"/>
    <property type="match status" value="1"/>
</dbReference>
<dbReference type="PRINTS" id="PR00059">
    <property type="entry name" value="RIBOSOMALL6"/>
</dbReference>
<dbReference type="SUPFAM" id="SSF56053">
    <property type="entry name" value="Ribosomal protein L6"/>
    <property type="match status" value="2"/>
</dbReference>
<dbReference type="PROSITE" id="PS00525">
    <property type="entry name" value="RIBOSOMAL_L6_1"/>
    <property type="match status" value="1"/>
</dbReference>
<feature type="chain" id="PRO_0000260854" description="Large ribosomal subunit protein uL6">
    <location>
        <begin position="1"/>
        <end position="177"/>
    </location>
</feature>
<accession>Q488Z8</accession>
<proteinExistence type="inferred from homology"/>
<organism>
    <name type="scientific">Colwellia psychrerythraea (strain 34H / ATCC BAA-681)</name>
    <name type="common">Vibrio psychroerythus</name>
    <dbReference type="NCBI Taxonomy" id="167879"/>
    <lineage>
        <taxon>Bacteria</taxon>
        <taxon>Pseudomonadati</taxon>
        <taxon>Pseudomonadota</taxon>
        <taxon>Gammaproteobacteria</taxon>
        <taxon>Alteromonadales</taxon>
        <taxon>Colwelliaceae</taxon>
        <taxon>Colwellia</taxon>
    </lineage>
</organism>
<gene>
    <name evidence="1" type="primary">rplF</name>
    <name type="ordered locus">CPS_0616</name>
</gene>
<comment type="function">
    <text evidence="1">This protein binds to the 23S rRNA, and is important in its secondary structure. It is located near the subunit interface in the base of the L7/L12 stalk, and near the tRNA binding site of the peptidyltransferase center.</text>
</comment>
<comment type="subunit">
    <text evidence="1">Part of the 50S ribosomal subunit.</text>
</comment>
<comment type="similarity">
    <text evidence="1">Belongs to the universal ribosomal protein uL6 family.</text>
</comment>
<reference key="1">
    <citation type="journal article" date="2005" name="Proc. Natl. Acad. Sci. U.S.A.">
        <title>The psychrophilic lifestyle as revealed by the genome sequence of Colwellia psychrerythraea 34H through genomic and proteomic analyses.</title>
        <authorList>
            <person name="Methe B.A."/>
            <person name="Nelson K.E."/>
            <person name="Deming J.W."/>
            <person name="Momen B."/>
            <person name="Melamud E."/>
            <person name="Zhang X."/>
            <person name="Moult J."/>
            <person name="Madupu R."/>
            <person name="Nelson W.C."/>
            <person name="Dodson R.J."/>
            <person name="Brinkac L.M."/>
            <person name="Daugherty S.C."/>
            <person name="Durkin A.S."/>
            <person name="DeBoy R.T."/>
            <person name="Kolonay J.F."/>
            <person name="Sullivan S.A."/>
            <person name="Zhou L."/>
            <person name="Davidsen T.M."/>
            <person name="Wu M."/>
            <person name="Huston A.L."/>
            <person name="Lewis M."/>
            <person name="Weaver B."/>
            <person name="Weidman J.F."/>
            <person name="Khouri H."/>
            <person name="Utterback T.R."/>
            <person name="Feldblyum T.V."/>
            <person name="Fraser C.M."/>
        </authorList>
    </citation>
    <scope>NUCLEOTIDE SEQUENCE [LARGE SCALE GENOMIC DNA]</scope>
    <source>
        <strain>34H / ATCC BAA-681</strain>
    </source>
</reference>
<protein>
    <recommendedName>
        <fullName evidence="1">Large ribosomal subunit protein uL6</fullName>
    </recommendedName>
    <alternativeName>
        <fullName evidence="2">50S ribosomal protein L6</fullName>
    </alternativeName>
</protein>